<proteinExistence type="inferred from homology"/>
<gene>
    <name type="ordered locus">Ent638_2380</name>
</gene>
<dbReference type="EMBL" id="CP000653">
    <property type="protein sequence ID" value="ABP61049.1"/>
    <property type="molecule type" value="Genomic_DNA"/>
</dbReference>
<dbReference type="RefSeq" id="WP_012017762.1">
    <property type="nucleotide sequence ID" value="NC_009436.1"/>
</dbReference>
<dbReference type="SMR" id="A4WBG9"/>
<dbReference type="STRING" id="399742.Ent638_2380"/>
<dbReference type="KEGG" id="ent:Ent638_2380"/>
<dbReference type="eggNOG" id="COG3140">
    <property type="taxonomic scope" value="Bacteria"/>
</dbReference>
<dbReference type="HOGENOM" id="CLU_185263_0_0_6"/>
<dbReference type="OrthoDB" id="6522084at2"/>
<dbReference type="Proteomes" id="UP000000230">
    <property type="component" value="Chromosome"/>
</dbReference>
<dbReference type="HAMAP" id="MF_00507">
    <property type="entry name" value="UPF0181"/>
    <property type="match status" value="1"/>
</dbReference>
<dbReference type="InterPro" id="IPR005371">
    <property type="entry name" value="UPF0181"/>
</dbReference>
<dbReference type="NCBIfam" id="NF003476">
    <property type="entry name" value="PRK05114.1"/>
    <property type="match status" value="1"/>
</dbReference>
<dbReference type="Pfam" id="PF03701">
    <property type="entry name" value="UPF0181"/>
    <property type="match status" value="1"/>
</dbReference>
<accession>A4WBG9</accession>
<protein>
    <recommendedName>
        <fullName evidence="1">UPF0181 protein Ent638_2380</fullName>
    </recommendedName>
</protein>
<reference key="1">
    <citation type="journal article" date="2010" name="PLoS Genet.">
        <title>Genome sequence of the plant growth promoting endophytic bacterium Enterobacter sp. 638.</title>
        <authorList>
            <person name="Taghavi S."/>
            <person name="van der Lelie D."/>
            <person name="Hoffman A."/>
            <person name="Zhang Y.B."/>
            <person name="Walla M.D."/>
            <person name="Vangronsveld J."/>
            <person name="Newman L."/>
            <person name="Monchy S."/>
        </authorList>
    </citation>
    <scope>NUCLEOTIDE SEQUENCE [LARGE SCALE GENOMIC DNA]</scope>
    <source>
        <strain>638</strain>
    </source>
</reference>
<sequence length="61" mass="6776">MFAGLPSLSHEQQQKAVERIQELMTQGMSSGEAITTVAQEIRATHTGERIVALFDDEDDEE</sequence>
<name>Y2380_ENT38</name>
<feature type="chain" id="PRO_1000060848" description="UPF0181 protein Ent638_2380">
    <location>
        <begin position="1"/>
        <end position="61"/>
    </location>
</feature>
<organism>
    <name type="scientific">Enterobacter sp. (strain 638)</name>
    <dbReference type="NCBI Taxonomy" id="399742"/>
    <lineage>
        <taxon>Bacteria</taxon>
        <taxon>Pseudomonadati</taxon>
        <taxon>Pseudomonadota</taxon>
        <taxon>Gammaproteobacteria</taxon>
        <taxon>Enterobacterales</taxon>
        <taxon>Enterobacteriaceae</taxon>
        <taxon>Enterobacter</taxon>
    </lineage>
</organism>
<comment type="similarity">
    <text evidence="1">Belongs to the UPF0181 family.</text>
</comment>
<evidence type="ECO:0000255" key="1">
    <source>
        <dbReference type="HAMAP-Rule" id="MF_00507"/>
    </source>
</evidence>